<organism>
    <name type="scientific">Rhizobium leguminosarum bv. trifolii (strain WSM2304)</name>
    <dbReference type="NCBI Taxonomy" id="395492"/>
    <lineage>
        <taxon>Bacteria</taxon>
        <taxon>Pseudomonadati</taxon>
        <taxon>Pseudomonadota</taxon>
        <taxon>Alphaproteobacteria</taxon>
        <taxon>Hyphomicrobiales</taxon>
        <taxon>Rhizobiaceae</taxon>
        <taxon>Rhizobium/Agrobacterium group</taxon>
        <taxon>Rhizobium</taxon>
    </lineage>
</organism>
<sequence length="425" mass="46953">MSKVSGSNGGDSKNTLYCSFCGKSQHEVRKLIAGPTVFICDECVELCMDIIREENKSSMVKSRDGVPTPQDIIKVLDEYVIGQRQAKKILSVAVHNHYKRLAHASKNGEVELAKSNIMLVGPTGCGKTYLAQTLARIIDVPFTMADATTLTEAGYVGEDVENIILKLLQSADYNVERAQRGIVYIDEVDKISRKSDNPSITRDVSGEGVQQALLKIMEGTVASVPPQGGRKHPQQEFLQVDTTNILFICGGAFAGLDKIISARGEKTSIGFGATVKAQDDRRVGEVLRELEPEDLVKFGLIPEFIGRLPVLATLEDLDEDALIQILSEPKNALIKQYQRLFEMEDVELTFHEDALREIARKAIVRKTGARGLRSIMEKILLDTMFELPTLEGVREVVISEEVVRGSARPLYIYADRQEEKANASA</sequence>
<protein>
    <recommendedName>
        <fullName evidence="1">ATP-dependent Clp protease ATP-binding subunit ClpX</fullName>
    </recommendedName>
</protein>
<proteinExistence type="inferred from homology"/>
<reference key="1">
    <citation type="journal article" date="2010" name="Stand. Genomic Sci.">
        <title>Complete genome sequence of Rhizobium leguminosarum bv trifolii strain WSM2304, an effective microsymbiont of the South American clover Trifolium polymorphum.</title>
        <authorList>
            <person name="Reeve W."/>
            <person name="O'Hara G."/>
            <person name="Chain P."/>
            <person name="Ardley J."/>
            <person name="Brau L."/>
            <person name="Nandesena K."/>
            <person name="Tiwari R."/>
            <person name="Malfatti S."/>
            <person name="Kiss H."/>
            <person name="Lapidus A."/>
            <person name="Copeland A."/>
            <person name="Nolan M."/>
            <person name="Land M."/>
            <person name="Ivanova N."/>
            <person name="Mavromatis K."/>
            <person name="Markowitz V."/>
            <person name="Kyrpides N."/>
            <person name="Melino V."/>
            <person name="Denton M."/>
            <person name="Yates R."/>
            <person name="Howieson J."/>
        </authorList>
    </citation>
    <scope>NUCLEOTIDE SEQUENCE [LARGE SCALE GENOMIC DNA]</scope>
    <source>
        <strain>WSM2304</strain>
    </source>
</reference>
<dbReference type="EMBL" id="CP001191">
    <property type="protein sequence ID" value="ACI54542.1"/>
    <property type="molecule type" value="Genomic_DNA"/>
</dbReference>
<dbReference type="RefSeq" id="WP_003573940.1">
    <property type="nucleotide sequence ID" value="NC_011369.1"/>
</dbReference>
<dbReference type="SMR" id="B5ZY09"/>
<dbReference type="STRING" id="395492.Rleg2_1248"/>
<dbReference type="GeneID" id="75219470"/>
<dbReference type="KEGG" id="rlt:Rleg2_1248"/>
<dbReference type="eggNOG" id="COG1219">
    <property type="taxonomic scope" value="Bacteria"/>
</dbReference>
<dbReference type="HOGENOM" id="CLU_014218_8_2_5"/>
<dbReference type="Proteomes" id="UP000008330">
    <property type="component" value="Chromosome"/>
</dbReference>
<dbReference type="GO" id="GO:0009376">
    <property type="term" value="C:HslUV protease complex"/>
    <property type="evidence" value="ECO:0007669"/>
    <property type="project" value="TreeGrafter"/>
</dbReference>
<dbReference type="GO" id="GO:0005524">
    <property type="term" value="F:ATP binding"/>
    <property type="evidence" value="ECO:0007669"/>
    <property type="project" value="UniProtKB-UniRule"/>
</dbReference>
<dbReference type="GO" id="GO:0016887">
    <property type="term" value="F:ATP hydrolysis activity"/>
    <property type="evidence" value="ECO:0007669"/>
    <property type="project" value="InterPro"/>
</dbReference>
<dbReference type="GO" id="GO:0140662">
    <property type="term" value="F:ATP-dependent protein folding chaperone"/>
    <property type="evidence" value="ECO:0007669"/>
    <property type="project" value="InterPro"/>
</dbReference>
<dbReference type="GO" id="GO:0046983">
    <property type="term" value="F:protein dimerization activity"/>
    <property type="evidence" value="ECO:0007669"/>
    <property type="project" value="InterPro"/>
</dbReference>
<dbReference type="GO" id="GO:0051082">
    <property type="term" value="F:unfolded protein binding"/>
    <property type="evidence" value="ECO:0007669"/>
    <property type="project" value="UniProtKB-UniRule"/>
</dbReference>
<dbReference type="GO" id="GO:0008270">
    <property type="term" value="F:zinc ion binding"/>
    <property type="evidence" value="ECO:0007669"/>
    <property type="project" value="InterPro"/>
</dbReference>
<dbReference type="GO" id="GO:0051301">
    <property type="term" value="P:cell division"/>
    <property type="evidence" value="ECO:0007669"/>
    <property type="project" value="TreeGrafter"/>
</dbReference>
<dbReference type="GO" id="GO:0051603">
    <property type="term" value="P:proteolysis involved in protein catabolic process"/>
    <property type="evidence" value="ECO:0007669"/>
    <property type="project" value="TreeGrafter"/>
</dbReference>
<dbReference type="CDD" id="cd19497">
    <property type="entry name" value="RecA-like_ClpX"/>
    <property type="match status" value="1"/>
</dbReference>
<dbReference type="FunFam" id="1.10.8.60:FF:000002">
    <property type="entry name" value="ATP-dependent Clp protease ATP-binding subunit ClpX"/>
    <property type="match status" value="1"/>
</dbReference>
<dbReference type="FunFam" id="3.40.50.300:FF:000005">
    <property type="entry name" value="ATP-dependent Clp protease ATP-binding subunit ClpX"/>
    <property type="match status" value="1"/>
</dbReference>
<dbReference type="Gene3D" id="1.10.8.60">
    <property type="match status" value="1"/>
</dbReference>
<dbReference type="Gene3D" id="6.20.220.10">
    <property type="entry name" value="ClpX chaperone, C4-type zinc finger domain"/>
    <property type="match status" value="1"/>
</dbReference>
<dbReference type="Gene3D" id="3.40.50.300">
    <property type="entry name" value="P-loop containing nucleotide triphosphate hydrolases"/>
    <property type="match status" value="1"/>
</dbReference>
<dbReference type="HAMAP" id="MF_00175">
    <property type="entry name" value="ClpX"/>
    <property type="match status" value="1"/>
</dbReference>
<dbReference type="InterPro" id="IPR003593">
    <property type="entry name" value="AAA+_ATPase"/>
</dbReference>
<dbReference type="InterPro" id="IPR050052">
    <property type="entry name" value="ATP-dep_Clp_protease_ClpX"/>
</dbReference>
<dbReference type="InterPro" id="IPR003959">
    <property type="entry name" value="ATPase_AAA_core"/>
</dbReference>
<dbReference type="InterPro" id="IPR019489">
    <property type="entry name" value="Clp_ATPase_C"/>
</dbReference>
<dbReference type="InterPro" id="IPR004487">
    <property type="entry name" value="Clp_protease_ATP-bd_su_ClpX"/>
</dbReference>
<dbReference type="InterPro" id="IPR046425">
    <property type="entry name" value="ClpX_bact"/>
</dbReference>
<dbReference type="InterPro" id="IPR027417">
    <property type="entry name" value="P-loop_NTPase"/>
</dbReference>
<dbReference type="InterPro" id="IPR010603">
    <property type="entry name" value="Znf_CppX_C4"/>
</dbReference>
<dbReference type="InterPro" id="IPR038366">
    <property type="entry name" value="Znf_CppX_C4_sf"/>
</dbReference>
<dbReference type="NCBIfam" id="TIGR00382">
    <property type="entry name" value="clpX"/>
    <property type="match status" value="1"/>
</dbReference>
<dbReference type="NCBIfam" id="NF003745">
    <property type="entry name" value="PRK05342.1"/>
    <property type="match status" value="1"/>
</dbReference>
<dbReference type="PANTHER" id="PTHR48102:SF7">
    <property type="entry name" value="ATP-DEPENDENT CLP PROTEASE ATP-BINDING SUBUNIT CLPX-LIKE, MITOCHONDRIAL"/>
    <property type="match status" value="1"/>
</dbReference>
<dbReference type="PANTHER" id="PTHR48102">
    <property type="entry name" value="ATP-DEPENDENT CLP PROTEASE ATP-BINDING SUBUNIT CLPX-LIKE, MITOCHONDRIAL-RELATED"/>
    <property type="match status" value="1"/>
</dbReference>
<dbReference type="Pfam" id="PF07724">
    <property type="entry name" value="AAA_2"/>
    <property type="match status" value="1"/>
</dbReference>
<dbReference type="Pfam" id="PF10431">
    <property type="entry name" value="ClpB_D2-small"/>
    <property type="match status" value="1"/>
</dbReference>
<dbReference type="Pfam" id="PF06689">
    <property type="entry name" value="zf-C4_ClpX"/>
    <property type="match status" value="1"/>
</dbReference>
<dbReference type="SMART" id="SM00382">
    <property type="entry name" value="AAA"/>
    <property type="match status" value="1"/>
</dbReference>
<dbReference type="SMART" id="SM01086">
    <property type="entry name" value="ClpB_D2-small"/>
    <property type="match status" value="1"/>
</dbReference>
<dbReference type="SMART" id="SM00994">
    <property type="entry name" value="zf-C4_ClpX"/>
    <property type="match status" value="1"/>
</dbReference>
<dbReference type="SUPFAM" id="SSF57716">
    <property type="entry name" value="Glucocorticoid receptor-like (DNA-binding domain)"/>
    <property type="match status" value="1"/>
</dbReference>
<dbReference type="SUPFAM" id="SSF52540">
    <property type="entry name" value="P-loop containing nucleoside triphosphate hydrolases"/>
    <property type="match status" value="1"/>
</dbReference>
<dbReference type="PROSITE" id="PS51902">
    <property type="entry name" value="CLPX_ZB"/>
    <property type="match status" value="1"/>
</dbReference>
<evidence type="ECO:0000255" key="1">
    <source>
        <dbReference type="HAMAP-Rule" id="MF_00175"/>
    </source>
</evidence>
<evidence type="ECO:0000255" key="2">
    <source>
        <dbReference type="PROSITE-ProRule" id="PRU01250"/>
    </source>
</evidence>
<feature type="chain" id="PRO_1000097989" description="ATP-dependent Clp protease ATP-binding subunit ClpX">
    <location>
        <begin position="1"/>
        <end position="425"/>
    </location>
</feature>
<feature type="domain" description="ClpX-type ZB" evidence="2">
    <location>
        <begin position="6"/>
        <end position="59"/>
    </location>
</feature>
<feature type="binding site" evidence="2">
    <location>
        <position position="18"/>
    </location>
    <ligand>
        <name>Zn(2+)</name>
        <dbReference type="ChEBI" id="CHEBI:29105"/>
    </ligand>
</feature>
<feature type="binding site" evidence="2">
    <location>
        <position position="21"/>
    </location>
    <ligand>
        <name>Zn(2+)</name>
        <dbReference type="ChEBI" id="CHEBI:29105"/>
    </ligand>
</feature>
<feature type="binding site" evidence="2">
    <location>
        <position position="40"/>
    </location>
    <ligand>
        <name>Zn(2+)</name>
        <dbReference type="ChEBI" id="CHEBI:29105"/>
    </ligand>
</feature>
<feature type="binding site" evidence="2">
    <location>
        <position position="43"/>
    </location>
    <ligand>
        <name>Zn(2+)</name>
        <dbReference type="ChEBI" id="CHEBI:29105"/>
    </ligand>
</feature>
<feature type="binding site" evidence="1">
    <location>
        <begin position="122"/>
        <end position="129"/>
    </location>
    <ligand>
        <name>ATP</name>
        <dbReference type="ChEBI" id="CHEBI:30616"/>
    </ligand>
</feature>
<accession>B5ZY09</accession>
<gene>
    <name evidence="1" type="primary">clpX</name>
    <name type="ordered locus">Rleg2_1248</name>
</gene>
<name>CLPX_RHILW</name>
<keyword id="KW-0067">ATP-binding</keyword>
<keyword id="KW-0143">Chaperone</keyword>
<keyword id="KW-0479">Metal-binding</keyword>
<keyword id="KW-0547">Nucleotide-binding</keyword>
<keyword id="KW-1185">Reference proteome</keyword>
<keyword id="KW-0862">Zinc</keyword>
<comment type="function">
    <text evidence="1">ATP-dependent specificity component of the Clp protease. It directs the protease to specific substrates. Can perform chaperone functions in the absence of ClpP.</text>
</comment>
<comment type="subunit">
    <text evidence="1">Component of the ClpX-ClpP complex. Forms a hexameric ring that, in the presence of ATP, binds to fourteen ClpP subunits assembled into a disk-like structure with a central cavity, resembling the structure of eukaryotic proteasomes.</text>
</comment>
<comment type="similarity">
    <text evidence="1">Belongs to the ClpX chaperone family.</text>
</comment>